<organism>
    <name type="scientific">Pseudomonas putida (strain W619)</name>
    <dbReference type="NCBI Taxonomy" id="390235"/>
    <lineage>
        <taxon>Bacteria</taxon>
        <taxon>Pseudomonadati</taxon>
        <taxon>Pseudomonadota</taxon>
        <taxon>Gammaproteobacteria</taxon>
        <taxon>Pseudomonadales</taxon>
        <taxon>Pseudomonadaceae</taxon>
        <taxon>Pseudomonas</taxon>
    </lineage>
</organism>
<accession>B1JAK0</accession>
<protein>
    <recommendedName>
        <fullName evidence="1">Large ribosomal subunit protein uL5</fullName>
    </recommendedName>
    <alternativeName>
        <fullName evidence="2">50S ribosomal protein L5</fullName>
    </alternativeName>
</protein>
<gene>
    <name evidence="1" type="primary">rplE</name>
    <name type="ordered locus">PputW619_4737</name>
</gene>
<dbReference type="EMBL" id="CP000949">
    <property type="protein sequence ID" value="ACA75213.1"/>
    <property type="molecule type" value="Genomic_DNA"/>
</dbReference>
<dbReference type="SMR" id="B1JAK0"/>
<dbReference type="STRING" id="390235.PputW619_4737"/>
<dbReference type="KEGG" id="ppw:PputW619_4737"/>
<dbReference type="eggNOG" id="COG0094">
    <property type="taxonomic scope" value="Bacteria"/>
</dbReference>
<dbReference type="HOGENOM" id="CLU_061015_2_1_6"/>
<dbReference type="OrthoDB" id="9806626at2"/>
<dbReference type="GO" id="GO:1990904">
    <property type="term" value="C:ribonucleoprotein complex"/>
    <property type="evidence" value="ECO:0007669"/>
    <property type="project" value="UniProtKB-KW"/>
</dbReference>
<dbReference type="GO" id="GO:0005840">
    <property type="term" value="C:ribosome"/>
    <property type="evidence" value="ECO:0007669"/>
    <property type="project" value="UniProtKB-KW"/>
</dbReference>
<dbReference type="GO" id="GO:0019843">
    <property type="term" value="F:rRNA binding"/>
    <property type="evidence" value="ECO:0007669"/>
    <property type="project" value="UniProtKB-UniRule"/>
</dbReference>
<dbReference type="GO" id="GO:0003735">
    <property type="term" value="F:structural constituent of ribosome"/>
    <property type="evidence" value="ECO:0007669"/>
    <property type="project" value="InterPro"/>
</dbReference>
<dbReference type="GO" id="GO:0000049">
    <property type="term" value="F:tRNA binding"/>
    <property type="evidence" value="ECO:0007669"/>
    <property type="project" value="UniProtKB-UniRule"/>
</dbReference>
<dbReference type="GO" id="GO:0006412">
    <property type="term" value="P:translation"/>
    <property type="evidence" value="ECO:0007669"/>
    <property type="project" value="UniProtKB-UniRule"/>
</dbReference>
<dbReference type="FunFam" id="3.30.1440.10:FF:000001">
    <property type="entry name" value="50S ribosomal protein L5"/>
    <property type="match status" value="1"/>
</dbReference>
<dbReference type="Gene3D" id="3.30.1440.10">
    <property type="match status" value="1"/>
</dbReference>
<dbReference type="HAMAP" id="MF_01333_B">
    <property type="entry name" value="Ribosomal_uL5_B"/>
    <property type="match status" value="1"/>
</dbReference>
<dbReference type="InterPro" id="IPR002132">
    <property type="entry name" value="Ribosomal_uL5"/>
</dbReference>
<dbReference type="InterPro" id="IPR020930">
    <property type="entry name" value="Ribosomal_uL5_bac-type"/>
</dbReference>
<dbReference type="InterPro" id="IPR031309">
    <property type="entry name" value="Ribosomal_uL5_C"/>
</dbReference>
<dbReference type="InterPro" id="IPR020929">
    <property type="entry name" value="Ribosomal_uL5_CS"/>
</dbReference>
<dbReference type="InterPro" id="IPR022803">
    <property type="entry name" value="Ribosomal_uL5_dom_sf"/>
</dbReference>
<dbReference type="InterPro" id="IPR031310">
    <property type="entry name" value="Ribosomal_uL5_N"/>
</dbReference>
<dbReference type="NCBIfam" id="NF000585">
    <property type="entry name" value="PRK00010.1"/>
    <property type="match status" value="1"/>
</dbReference>
<dbReference type="PANTHER" id="PTHR11994">
    <property type="entry name" value="60S RIBOSOMAL PROTEIN L11-RELATED"/>
    <property type="match status" value="1"/>
</dbReference>
<dbReference type="Pfam" id="PF00281">
    <property type="entry name" value="Ribosomal_L5"/>
    <property type="match status" value="1"/>
</dbReference>
<dbReference type="Pfam" id="PF00673">
    <property type="entry name" value="Ribosomal_L5_C"/>
    <property type="match status" value="1"/>
</dbReference>
<dbReference type="PIRSF" id="PIRSF002161">
    <property type="entry name" value="Ribosomal_L5"/>
    <property type="match status" value="1"/>
</dbReference>
<dbReference type="SUPFAM" id="SSF55282">
    <property type="entry name" value="RL5-like"/>
    <property type="match status" value="1"/>
</dbReference>
<dbReference type="PROSITE" id="PS00358">
    <property type="entry name" value="RIBOSOMAL_L5"/>
    <property type="match status" value="1"/>
</dbReference>
<proteinExistence type="inferred from homology"/>
<sequence length="179" mass="20412">MARLKEIYRNEIAPKLKEELKLSNVMEVPRVTKITLNMGLGEAIGDKKVIEHAVADLEKITGQKPVVTFARKSIAGFKVREGWPIGVKVTLRREKMYEFLDRLLAISLPRVRDFRGLNAKSFDGRGNYSMGVKEQIIFPEIDYDKIDALRGLDITLTTTARSDDEGRALLRAFKFPFRN</sequence>
<comment type="function">
    <text evidence="1">This is one of the proteins that bind and probably mediate the attachment of the 5S RNA into the large ribosomal subunit, where it forms part of the central protuberance. In the 70S ribosome it contacts protein S13 of the 30S subunit (bridge B1b), connecting the 2 subunits; this bridge is implicated in subunit movement. Contacts the P site tRNA; the 5S rRNA and some of its associated proteins might help stabilize positioning of ribosome-bound tRNAs.</text>
</comment>
<comment type="subunit">
    <text evidence="1">Part of the 50S ribosomal subunit; part of the 5S rRNA/L5/L18/L25 subcomplex. Contacts the 5S rRNA and the P site tRNA. Forms a bridge to the 30S subunit in the 70S ribosome.</text>
</comment>
<comment type="similarity">
    <text evidence="1">Belongs to the universal ribosomal protein uL5 family.</text>
</comment>
<name>RL5_PSEPW</name>
<feature type="chain" id="PRO_1000142435" description="Large ribosomal subunit protein uL5">
    <location>
        <begin position="1"/>
        <end position="179"/>
    </location>
</feature>
<keyword id="KW-0687">Ribonucleoprotein</keyword>
<keyword id="KW-0689">Ribosomal protein</keyword>
<keyword id="KW-0694">RNA-binding</keyword>
<keyword id="KW-0699">rRNA-binding</keyword>
<keyword id="KW-0820">tRNA-binding</keyword>
<evidence type="ECO:0000255" key="1">
    <source>
        <dbReference type="HAMAP-Rule" id="MF_01333"/>
    </source>
</evidence>
<evidence type="ECO:0000305" key="2"/>
<reference key="1">
    <citation type="submission" date="2008-02" db="EMBL/GenBank/DDBJ databases">
        <title>Complete sequence of Pseudomonas putida W619.</title>
        <authorList>
            <person name="Copeland A."/>
            <person name="Lucas S."/>
            <person name="Lapidus A."/>
            <person name="Barry K."/>
            <person name="Detter J.C."/>
            <person name="Glavina del Rio T."/>
            <person name="Dalin E."/>
            <person name="Tice H."/>
            <person name="Pitluck S."/>
            <person name="Chain P."/>
            <person name="Malfatti S."/>
            <person name="Shin M."/>
            <person name="Vergez L."/>
            <person name="Schmutz J."/>
            <person name="Larimer F."/>
            <person name="Land M."/>
            <person name="Hauser L."/>
            <person name="Kyrpides N."/>
            <person name="Kim E."/>
            <person name="Taghavi S."/>
            <person name="Vangronsveld D."/>
            <person name="van der Lelie D."/>
            <person name="Richardson P."/>
        </authorList>
    </citation>
    <scope>NUCLEOTIDE SEQUENCE [LARGE SCALE GENOMIC DNA]</scope>
    <source>
        <strain>W619</strain>
    </source>
</reference>